<keyword id="KW-0028">Amino-acid biosynthesis</keyword>
<keyword id="KW-0479">Metal-binding</keyword>
<keyword id="KW-0486">Methionine biosynthesis</keyword>
<keyword id="KW-0489">Methyltransferase</keyword>
<keyword id="KW-1185">Reference proteome</keyword>
<keyword id="KW-0677">Repeat</keyword>
<keyword id="KW-0808">Transferase</keyword>
<keyword id="KW-0862">Zinc</keyword>
<feature type="chain" id="PRO_0000098625" description="5-methyltetrahydropteroyltriglutamate--homocysteine methyltransferase">
    <location>
        <begin position="1"/>
        <end position="760"/>
    </location>
</feature>
<feature type="active site" description="Proton donor" evidence="1">
    <location>
        <position position="696"/>
    </location>
</feature>
<feature type="binding site" evidence="1">
    <location>
        <begin position="17"/>
        <end position="20"/>
    </location>
    <ligand>
        <name>5-methyltetrahydropteroyltri-L-glutamate</name>
        <dbReference type="ChEBI" id="CHEBI:58207"/>
    </ligand>
</feature>
<feature type="binding site" evidence="1">
    <location>
        <position position="113"/>
    </location>
    <ligand>
        <name>5-methyltetrahydropteroyltri-L-glutamate</name>
        <dbReference type="ChEBI" id="CHEBI:58207"/>
    </ligand>
</feature>
<feature type="binding site" evidence="1">
    <location>
        <begin position="433"/>
        <end position="435"/>
    </location>
    <ligand>
        <name>L-homocysteine</name>
        <dbReference type="ChEBI" id="CHEBI:58199"/>
    </ligand>
</feature>
<feature type="binding site" evidence="1">
    <location>
        <begin position="433"/>
        <end position="435"/>
    </location>
    <ligand>
        <name>L-methionine</name>
        <dbReference type="ChEBI" id="CHEBI:57844"/>
    </ligand>
</feature>
<feature type="binding site" evidence="1">
    <location>
        <position position="486"/>
    </location>
    <ligand>
        <name>L-homocysteine</name>
        <dbReference type="ChEBI" id="CHEBI:58199"/>
    </ligand>
</feature>
<feature type="binding site" evidence="1">
    <location>
        <position position="486"/>
    </location>
    <ligand>
        <name>L-methionine</name>
        <dbReference type="ChEBI" id="CHEBI:57844"/>
    </ligand>
</feature>
<feature type="binding site" evidence="1">
    <location>
        <begin position="517"/>
        <end position="518"/>
    </location>
    <ligand>
        <name>5-methyltetrahydropteroyltri-L-glutamate</name>
        <dbReference type="ChEBI" id="CHEBI:58207"/>
    </ligand>
</feature>
<feature type="binding site" evidence="1">
    <location>
        <position position="563"/>
    </location>
    <ligand>
        <name>5-methyltetrahydropteroyltri-L-glutamate</name>
        <dbReference type="ChEBI" id="CHEBI:58207"/>
    </ligand>
</feature>
<feature type="binding site" evidence="1">
    <location>
        <position position="601"/>
    </location>
    <ligand>
        <name>L-homocysteine</name>
        <dbReference type="ChEBI" id="CHEBI:58199"/>
    </ligand>
</feature>
<feature type="binding site" evidence="1">
    <location>
        <position position="601"/>
    </location>
    <ligand>
        <name>L-methionine</name>
        <dbReference type="ChEBI" id="CHEBI:57844"/>
    </ligand>
</feature>
<feature type="binding site" evidence="1">
    <location>
        <position position="607"/>
    </location>
    <ligand>
        <name>5-methyltetrahydropteroyltri-L-glutamate</name>
        <dbReference type="ChEBI" id="CHEBI:58207"/>
    </ligand>
</feature>
<feature type="binding site" evidence="1">
    <location>
        <position position="643"/>
    </location>
    <ligand>
        <name>Zn(2+)</name>
        <dbReference type="ChEBI" id="CHEBI:29105"/>
        <note>catalytic</note>
    </ligand>
</feature>
<feature type="binding site" evidence="1">
    <location>
        <position position="645"/>
    </location>
    <ligand>
        <name>Zn(2+)</name>
        <dbReference type="ChEBI" id="CHEBI:29105"/>
        <note>catalytic</note>
    </ligand>
</feature>
<feature type="binding site" evidence="1">
    <location>
        <position position="667"/>
    </location>
    <ligand>
        <name>Zn(2+)</name>
        <dbReference type="ChEBI" id="CHEBI:29105"/>
        <note>catalytic</note>
    </ligand>
</feature>
<feature type="binding site" evidence="1">
    <location>
        <position position="728"/>
    </location>
    <ligand>
        <name>Zn(2+)</name>
        <dbReference type="ChEBI" id="CHEBI:29105"/>
        <note>catalytic</note>
    </ligand>
</feature>
<comment type="function">
    <text evidence="1">Catalyzes the transfer of a methyl group from 5-methyltetrahydrofolate to homocysteine resulting in methionine formation.</text>
</comment>
<comment type="catalytic activity">
    <reaction evidence="1">
        <text>5-methyltetrahydropteroyltri-L-glutamate + L-homocysteine = tetrahydropteroyltri-L-glutamate + L-methionine</text>
        <dbReference type="Rhea" id="RHEA:21196"/>
        <dbReference type="ChEBI" id="CHEBI:57844"/>
        <dbReference type="ChEBI" id="CHEBI:58140"/>
        <dbReference type="ChEBI" id="CHEBI:58199"/>
        <dbReference type="ChEBI" id="CHEBI:58207"/>
        <dbReference type="EC" id="2.1.1.14"/>
    </reaction>
</comment>
<comment type="cofactor">
    <cofactor evidence="1">
        <name>Zn(2+)</name>
        <dbReference type="ChEBI" id="CHEBI:29105"/>
    </cofactor>
    <text evidence="1">Binds 1 zinc ion per subunit.</text>
</comment>
<comment type="pathway">
    <text evidence="1">Amino-acid biosynthesis; L-methionine biosynthesis via de novo pathway; L-methionine from L-homocysteine (MetE route): step 1/1.</text>
</comment>
<comment type="similarity">
    <text evidence="1">Belongs to the vitamin-B12 independent methionine synthase family.</text>
</comment>
<accession>Q7NS23</accession>
<dbReference type="EC" id="2.1.1.14" evidence="1"/>
<dbReference type="EMBL" id="AE016825">
    <property type="protein sequence ID" value="AAQ61266.1"/>
    <property type="molecule type" value="Genomic_DNA"/>
</dbReference>
<dbReference type="RefSeq" id="WP_011137151.1">
    <property type="nucleotide sequence ID" value="NC_005085.1"/>
</dbReference>
<dbReference type="SMR" id="Q7NS23"/>
<dbReference type="STRING" id="243365.CV_3604"/>
<dbReference type="KEGG" id="cvi:CV_3604"/>
<dbReference type="eggNOG" id="COG0620">
    <property type="taxonomic scope" value="Bacteria"/>
</dbReference>
<dbReference type="HOGENOM" id="CLU_013175_0_0_4"/>
<dbReference type="OrthoDB" id="244285at2"/>
<dbReference type="UniPathway" id="UPA00051">
    <property type="reaction ID" value="UER00082"/>
</dbReference>
<dbReference type="Proteomes" id="UP000001424">
    <property type="component" value="Chromosome"/>
</dbReference>
<dbReference type="GO" id="GO:0003871">
    <property type="term" value="F:5-methyltetrahydropteroyltriglutamate-homocysteine S-methyltransferase activity"/>
    <property type="evidence" value="ECO:0007669"/>
    <property type="project" value="UniProtKB-UniRule"/>
</dbReference>
<dbReference type="GO" id="GO:0008270">
    <property type="term" value="F:zinc ion binding"/>
    <property type="evidence" value="ECO:0007669"/>
    <property type="project" value="InterPro"/>
</dbReference>
<dbReference type="GO" id="GO:0009086">
    <property type="term" value="P:methionine biosynthetic process"/>
    <property type="evidence" value="ECO:0007669"/>
    <property type="project" value="UniProtKB-UniRule"/>
</dbReference>
<dbReference type="GO" id="GO:0032259">
    <property type="term" value="P:methylation"/>
    <property type="evidence" value="ECO:0007669"/>
    <property type="project" value="UniProtKB-KW"/>
</dbReference>
<dbReference type="CDD" id="cd03311">
    <property type="entry name" value="CIMS_C_terminal_like"/>
    <property type="match status" value="1"/>
</dbReference>
<dbReference type="CDD" id="cd03312">
    <property type="entry name" value="CIMS_N_terminal_like"/>
    <property type="match status" value="1"/>
</dbReference>
<dbReference type="FunFam" id="3.20.20.210:FF:000002">
    <property type="entry name" value="5-methyltetrahydropteroyltriglutamate--homocysteine methyltransferase"/>
    <property type="match status" value="1"/>
</dbReference>
<dbReference type="Gene3D" id="3.20.20.210">
    <property type="match status" value="2"/>
</dbReference>
<dbReference type="HAMAP" id="MF_00172">
    <property type="entry name" value="Meth_synth"/>
    <property type="match status" value="1"/>
</dbReference>
<dbReference type="InterPro" id="IPR013215">
    <property type="entry name" value="Cbl-indep_Met_Synth_N"/>
</dbReference>
<dbReference type="InterPro" id="IPR006276">
    <property type="entry name" value="Cobalamin-indep_Met_synthase"/>
</dbReference>
<dbReference type="InterPro" id="IPR002629">
    <property type="entry name" value="Met_Synth_C/arc"/>
</dbReference>
<dbReference type="InterPro" id="IPR038071">
    <property type="entry name" value="UROD/MetE-like_sf"/>
</dbReference>
<dbReference type="NCBIfam" id="TIGR01371">
    <property type="entry name" value="met_syn_B12ind"/>
    <property type="match status" value="1"/>
</dbReference>
<dbReference type="NCBIfam" id="NF003556">
    <property type="entry name" value="PRK05222.1"/>
    <property type="match status" value="1"/>
</dbReference>
<dbReference type="PANTHER" id="PTHR30519">
    <property type="entry name" value="5-METHYLTETRAHYDROPTEROYLTRIGLUTAMATE--HOMOCYSTEINE METHYLTRANSFERASE"/>
    <property type="match status" value="1"/>
</dbReference>
<dbReference type="Pfam" id="PF08267">
    <property type="entry name" value="Meth_synt_1"/>
    <property type="match status" value="1"/>
</dbReference>
<dbReference type="Pfam" id="PF01717">
    <property type="entry name" value="Meth_synt_2"/>
    <property type="match status" value="1"/>
</dbReference>
<dbReference type="PIRSF" id="PIRSF000382">
    <property type="entry name" value="MeTrfase_B12_ind"/>
    <property type="match status" value="1"/>
</dbReference>
<dbReference type="SUPFAM" id="SSF51726">
    <property type="entry name" value="UROD/MetE-like"/>
    <property type="match status" value="2"/>
</dbReference>
<evidence type="ECO:0000255" key="1">
    <source>
        <dbReference type="HAMAP-Rule" id="MF_00172"/>
    </source>
</evidence>
<name>METE_CHRVO</name>
<sequence>MSHATHLLGFPRIGAKRELKTLLERYWKQELDEAALSQGAKELRQKHWLLQKGAGVELSPVGDFSLYDHVLDAQLLVGAAPARFGFDAAALTTGQYFELARGNAVQPAMEMTKWFDTNYHYLVPEWHADTAFSAQPERLLSQLREARALGVAAKPVLLGPLSLLWLGKAKGRPFDRLALLPGLVAAYRELLSSLRAAGAEWAQIDEPILALDLEPSWLDAFAPAYAQLSRHAPKLLLATYFGDVSEHAARLKSLPVAGLHLDLVRAPEQISAFLPDYPADKVLSAGIVDGRNIWRADLSALLDRLAPLAQQLGDRLWLAPSCSLLHSPFDAAAETGLDPELKNWLAFAVQKLNELKTLKRGLEHGRSAIAGELSGSDFAREQRRASPRIHDPAVARRLAALPEGTDRRASPYPIRAERQQAWLKLPPLPTTTIGSFPQTPAIRASRAAFKKGELSAAGYRQAMEKEIELAIRRQEALGLDVLVHGEAERNDMVEYFGEQLAGFAFTAGGWVQSYGSRCVKPPIIFGDVARPKPMTVDWARYAQSLTAKPVKGMLTGPVTILQWSFVRDDLPRREVCRQIALALNDEVLDLEAAGIRVIQIDEPAIREGLPLKRAGRDVYLAWAGEAFRLSSRGVDDATQIHTHMCYSEFGDILPAIAALDADVITIETSRSDMALLADFGRFRYPNAIGPGVYDIHSPRVPSAAEIRALLDKALRVIPAERLWVNPDCGLKTRGWPEVEAALAAMVAVGRELREKLAQAA</sequence>
<organism>
    <name type="scientific">Chromobacterium violaceum (strain ATCC 12472 / DSM 30191 / JCM 1249 / CCUG 213 / NBRC 12614 / NCIMB 9131 / NCTC 9757 / MK)</name>
    <dbReference type="NCBI Taxonomy" id="243365"/>
    <lineage>
        <taxon>Bacteria</taxon>
        <taxon>Pseudomonadati</taxon>
        <taxon>Pseudomonadota</taxon>
        <taxon>Betaproteobacteria</taxon>
        <taxon>Neisseriales</taxon>
        <taxon>Chromobacteriaceae</taxon>
        <taxon>Chromobacterium</taxon>
    </lineage>
</organism>
<reference key="1">
    <citation type="journal article" date="2003" name="Proc. Natl. Acad. Sci. U.S.A.">
        <title>The complete genome sequence of Chromobacterium violaceum reveals remarkable and exploitable bacterial adaptability.</title>
        <authorList>
            <person name="Vasconcelos A.T.R."/>
            <person name="de Almeida D.F."/>
            <person name="Hungria M."/>
            <person name="Guimaraes C.T."/>
            <person name="Antonio R.V."/>
            <person name="Almeida F.C."/>
            <person name="de Almeida L.G.P."/>
            <person name="de Almeida R."/>
            <person name="Alves-Gomes J.A."/>
            <person name="Andrade E.M."/>
            <person name="Araripe J."/>
            <person name="de Araujo M.F.F."/>
            <person name="Astolfi-Filho S."/>
            <person name="Azevedo V."/>
            <person name="Baptista A.J."/>
            <person name="Bataus L.A.M."/>
            <person name="Batista J.S."/>
            <person name="Belo A."/>
            <person name="van den Berg C."/>
            <person name="Bogo M."/>
            <person name="Bonatto S."/>
            <person name="Bordignon J."/>
            <person name="Brigido M.M."/>
            <person name="Brito C.A."/>
            <person name="Brocchi M."/>
            <person name="Burity H.A."/>
            <person name="Camargo A.A."/>
            <person name="Cardoso D.D.P."/>
            <person name="Carneiro N.P."/>
            <person name="Carraro D.M."/>
            <person name="Carvalho C.M.B."/>
            <person name="Cascardo J.C.M."/>
            <person name="Cavada B.S."/>
            <person name="Chueire L.M.O."/>
            <person name="Creczynski-Pasa T.B."/>
            <person name="Cunha-Junior N.C."/>
            <person name="Fagundes N."/>
            <person name="Falcao C.L."/>
            <person name="Fantinatti F."/>
            <person name="Farias I.P."/>
            <person name="Felipe M.S.S."/>
            <person name="Ferrari L.P."/>
            <person name="Ferro J.A."/>
            <person name="Ferro M.I.T."/>
            <person name="Franco G.R."/>
            <person name="Freitas N.S.A."/>
            <person name="Furlan L.R."/>
            <person name="Gazzinelli R.T."/>
            <person name="Gomes E.A."/>
            <person name="Goncalves P.R."/>
            <person name="Grangeiro T.B."/>
            <person name="Grattapaglia D."/>
            <person name="Grisard E.C."/>
            <person name="Hanna E.S."/>
            <person name="Jardim S.N."/>
            <person name="Laurino J."/>
            <person name="Leoi L.C.T."/>
            <person name="Lima L.F.A."/>
            <person name="Loureiro M.F."/>
            <person name="Lyra M.C.C.P."/>
            <person name="Madeira H.M.F."/>
            <person name="Manfio G.P."/>
            <person name="Maranhao A.Q."/>
            <person name="Martins W.S."/>
            <person name="di Mauro S.M.Z."/>
            <person name="de Medeiros S.R.B."/>
            <person name="Meissner R.V."/>
            <person name="Moreira M.A.M."/>
            <person name="Nascimento F.F."/>
            <person name="Nicolas M.F."/>
            <person name="Oliveira J.G."/>
            <person name="Oliveira S.C."/>
            <person name="Paixao R.F.C."/>
            <person name="Parente J.A."/>
            <person name="Pedrosa F.O."/>
            <person name="Pena S.D.J."/>
            <person name="Pereira J.O."/>
            <person name="Pereira M."/>
            <person name="Pinto L.S.R.C."/>
            <person name="Pinto L.S."/>
            <person name="Porto J.I.R."/>
            <person name="Potrich D.P."/>
            <person name="Ramalho-Neto C.E."/>
            <person name="Reis A.M.M."/>
            <person name="Rigo L.U."/>
            <person name="Rondinelli E."/>
            <person name="Santos E.B.P."/>
            <person name="Santos F.R."/>
            <person name="Schneider M.P.C."/>
            <person name="Seuanez H.N."/>
            <person name="Silva A.M.R."/>
            <person name="da Silva A.L.C."/>
            <person name="Silva D.W."/>
            <person name="Silva R."/>
            <person name="Simoes I.C."/>
            <person name="Simon D."/>
            <person name="Soares C.M.A."/>
            <person name="Soares R.B.A."/>
            <person name="Souza E.M."/>
            <person name="Souza K.R.L."/>
            <person name="Souza R.C."/>
            <person name="Steffens M.B.R."/>
            <person name="Steindel M."/>
            <person name="Teixeira S.R."/>
            <person name="Urmenyi T."/>
            <person name="Vettore A."/>
            <person name="Wassem R."/>
            <person name="Zaha A."/>
            <person name="Simpson A.J.G."/>
        </authorList>
    </citation>
    <scope>NUCLEOTIDE SEQUENCE [LARGE SCALE GENOMIC DNA]</scope>
    <source>
        <strain>ATCC 12472 / DSM 30191 / JCM 1249 / CCUG 213 / NBRC 12614 / NCIMB 9131 / NCTC 9757 / MK</strain>
    </source>
</reference>
<protein>
    <recommendedName>
        <fullName evidence="1">5-methyltetrahydropteroyltriglutamate--homocysteine methyltransferase</fullName>
        <ecNumber evidence="1">2.1.1.14</ecNumber>
    </recommendedName>
    <alternativeName>
        <fullName evidence="1">Cobalamin-independent methionine synthase</fullName>
    </alternativeName>
    <alternativeName>
        <fullName evidence="1">Methionine synthase, vitamin-B12 independent isozyme</fullName>
    </alternativeName>
</protein>
<gene>
    <name evidence="1" type="primary">metE</name>
    <name type="ordered locus">CV_3604</name>
</gene>
<proteinExistence type="inferred from homology"/>